<accession>A7FCN2</accession>
<proteinExistence type="inferred from homology"/>
<keyword id="KW-0997">Cell inner membrane</keyword>
<keyword id="KW-1003">Cell membrane</keyword>
<keyword id="KW-0406">Ion transport</keyword>
<keyword id="KW-0472">Membrane</keyword>
<keyword id="KW-0630">Potassium</keyword>
<keyword id="KW-0633">Potassium transport</keyword>
<keyword id="KW-0769">Symport</keyword>
<keyword id="KW-0812">Transmembrane</keyword>
<keyword id="KW-1133">Transmembrane helix</keyword>
<keyword id="KW-0813">Transport</keyword>
<evidence type="ECO:0000255" key="1">
    <source>
        <dbReference type="HAMAP-Rule" id="MF_01522"/>
    </source>
</evidence>
<protein>
    <recommendedName>
        <fullName evidence="1">Low affinity potassium transport system protein Kup</fullName>
    </recommendedName>
    <alternativeName>
        <fullName evidence="1">Kup system potassium uptake protein</fullName>
    </alternativeName>
</protein>
<comment type="function">
    <text evidence="1">Responsible for the low-affinity transport of potassium into the cell. Likely operates as a K(+):H(+) symporter.</text>
</comment>
<comment type="catalytic activity">
    <reaction evidence="1">
        <text>K(+)(in) + H(+)(in) = K(+)(out) + H(+)(out)</text>
        <dbReference type="Rhea" id="RHEA:28490"/>
        <dbReference type="ChEBI" id="CHEBI:15378"/>
        <dbReference type="ChEBI" id="CHEBI:29103"/>
    </reaction>
    <physiologicalReaction direction="right-to-left" evidence="1">
        <dbReference type="Rhea" id="RHEA:28492"/>
    </physiologicalReaction>
</comment>
<comment type="subcellular location">
    <subcellularLocation>
        <location evidence="1">Cell inner membrane</location>
        <topology evidence="1">Multi-pass membrane protein</topology>
    </subcellularLocation>
</comment>
<comment type="similarity">
    <text evidence="1">Belongs to the HAK/KUP transporter (TC 2.A.72) family.</text>
</comment>
<organism>
    <name type="scientific">Yersinia pseudotuberculosis serotype O:1b (strain IP 31758)</name>
    <dbReference type="NCBI Taxonomy" id="349747"/>
    <lineage>
        <taxon>Bacteria</taxon>
        <taxon>Pseudomonadati</taxon>
        <taxon>Pseudomonadota</taxon>
        <taxon>Gammaproteobacteria</taxon>
        <taxon>Enterobacterales</taxon>
        <taxon>Yersiniaceae</taxon>
        <taxon>Yersinia</taxon>
    </lineage>
</organism>
<name>KUP_YERP3</name>
<gene>
    <name evidence="1" type="primary">kup</name>
    <name type="ordered locus">YpsIP31758_0006</name>
</gene>
<dbReference type="EMBL" id="CP000720">
    <property type="protein sequence ID" value="ABS49890.1"/>
    <property type="molecule type" value="Genomic_DNA"/>
</dbReference>
<dbReference type="RefSeq" id="WP_011191440.1">
    <property type="nucleotide sequence ID" value="NC_009708.1"/>
</dbReference>
<dbReference type="GeneID" id="49788031"/>
<dbReference type="KEGG" id="ypi:YpsIP31758_0006"/>
<dbReference type="HOGENOM" id="CLU_008142_4_2_6"/>
<dbReference type="Proteomes" id="UP000002412">
    <property type="component" value="Chromosome"/>
</dbReference>
<dbReference type="GO" id="GO:0005886">
    <property type="term" value="C:plasma membrane"/>
    <property type="evidence" value="ECO:0007669"/>
    <property type="project" value="UniProtKB-SubCell"/>
</dbReference>
<dbReference type="GO" id="GO:0015079">
    <property type="term" value="F:potassium ion transmembrane transporter activity"/>
    <property type="evidence" value="ECO:0007669"/>
    <property type="project" value="UniProtKB-UniRule"/>
</dbReference>
<dbReference type="GO" id="GO:0015293">
    <property type="term" value="F:symporter activity"/>
    <property type="evidence" value="ECO:0007669"/>
    <property type="project" value="UniProtKB-UniRule"/>
</dbReference>
<dbReference type="HAMAP" id="MF_01522">
    <property type="entry name" value="Kup"/>
    <property type="match status" value="1"/>
</dbReference>
<dbReference type="InterPro" id="IPR003855">
    <property type="entry name" value="K+_transporter"/>
</dbReference>
<dbReference type="InterPro" id="IPR053952">
    <property type="entry name" value="K_trans_C"/>
</dbReference>
<dbReference type="InterPro" id="IPR053951">
    <property type="entry name" value="K_trans_N"/>
</dbReference>
<dbReference type="InterPro" id="IPR023051">
    <property type="entry name" value="Kup"/>
</dbReference>
<dbReference type="NCBIfam" id="TIGR00794">
    <property type="entry name" value="kup"/>
    <property type="match status" value="1"/>
</dbReference>
<dbReference type="NCBIfam" id="NF008015">
    <property type="entry name" value="PRK10745.1"/>
    <property type="match status" value="1"/>
</dbReference>
<dbReference type="PANTHER" id="PTHR30540:SF79">
    <property type="entry name" value="LOW AFFINITY POTASSIUM TRANSPORT SYSTEM PROTEIN KUP"/>
    <property type="match status" value="1"/>
</dbReference>
<dbReference type="PANTHER" id="PTHR30540">
    <property type="entry name" value="OSMOTIC STRESS POTASSIUM TRANSPORTER"/>
    <property type="match status" value="1"/>
</dbReference>
<dbReference type="Pfam" id="PF02705">
    <property type="entry name" value="K_trans"/>
    <property type="match status" value="1"/>
</dbReference>
<dbReference type="Pfam" id="PF22776">
    <property type="entry name" value="K_trans_C"/>
    <property type="match status" value="1"/>
</dbReference>
<reference key="1">
    <citation type="journal article" date="2007" name="PLoS Genet.">
        <title>The complete genome sequence of Yersinia pseudotuberculosis IP31758, the causative agent of Far East scarlet-like fever.</title>
        <authorList>
            <person name="Eppinger M."/>
            <person name="Rosovitz M.J."/>
            <person name="Fricke W.F."/>
            <person name="Rasko D.A."/>
            <person name="Kokorina G."/>
            <person name="Fayolle C."/>
            <person name="Lindler L.E."/>
            <person name="Carniel E."/>
            <person name="Ravel J."/>
        </authorList>
    </citation>
    <scope>NUCLEOTIDE SEQUENCE [LARGE SCALE GENOMIC DNA]</scope>
    <source>
        <strain>IP 31758</strain>
    </source>
</reference>
<feature type="chain" id="PRO_1000068651" description="Low affinity potassium transport system protein Kup">
    <location>
        <begin position="1"/>
        <end position="622"/>
    </location>
</feature>
<feature type="transmembrane region" description="Helical" evidence="1">
    <location>
        <begin position="9"/>
        <end position="29"/>
    </location>
</feature>
<feature type="transmembrane region" description="Helical" evidence="1">
    <location>
        <begin position="46"/>
        <end position="66"/>
    </location>
</feature>
<feature type="transmembrane region" description="Helical" evidence="1">
    <location>
        <begin position="101"/>
        <end position="121"/>
    </location>
</feature>
<feature type="transmembrane region" description="Helical" evidence="1">
    <location>
        <begin position="137"/>
        <end position="157"/>
    </location>
</feature>
<feature type="transmembrane region" description="Helical" evidence="1">
    <location>
        <begin position="165"/>
        <end position="185"/>
    </location>
</feature>
<feature type="transmembrane region" description="Helical" evidence="1">
    <location>
        <begin position="213"/>
        <end position="233"/>
    </location>
</feature>
<feature type="transmembrane region" description="Helical" evidence="1">
    <location>
        <begin position="247"/>
        <end position="267"/>
    </location>
</feature>
<feature type="transmembrane region" description="Helical" evidence="1">
    <location>
        <begin position="276"/>
        <end position="296"/>
    </location>
</feature>
<feature type="transmembrane region" description="Helical" evidence="1">
    <location>
        <begin position="337"/>
        <end position="357"/>
    </location>
</feature>
<feature type="transmembrane region" description="Helical" evidence="1">
    <location>
        <begin position="363"/>
        <end position="383"/>
    </location>
</feature>
<feature type="transmembrane region" description="Helical" evidence="1">
    <location>
        <begin position="395"/>
        <end position="415"/>
    </location>
</feature>
<feature type="transmembrane region" description="Helical" evidence="1">
    <location>
        <begin position="416"/>
        <end position="436"/>
    </location>
</feature>
<sequence length="622" mass="69012">MSTEHKQSLSAVTLAAIGVVYGDIGTSPLYTLRECFSGHYGFDVRPDVVFGFLSLIFWMLILVVSVKYLTYVMRADNAGEGGILTLMSLAGRNTSSRATSILVVLGLIGGSFFYGEVVITPAISVMSAIEGLEIAAPALDPYIVPCSIAVLTLLFVIQKHGTGSVGKLFAPVMLVWFLTLALLGLRSIIANPEVLAALNPKWAISFFVEYKSVSFFALGAVVLAITGVEALYADMGHFGKFPIRLAWFTVVLPSLVLNYFGQGALLLKNPEAIKNPFFLLAPDWALIPLLILATLATVIASQAVISGVFSLTRQAVRLGYLPPMRIIHTSEMESGQIYIPVINWTLYLAVVLVIIGFERSSNLAAAYGIAVTGTMVITSILFCTVAWKNWHWNRFLVAFLLMVLLIIDIPMFSANVLKLFSGGWLPLSLGLVMFIIMTTWKSERFSLLRRMHEHSNSLEAMIASLEKSPPVRVPGTAVYMSRAMNVIPFALLHNLKHNKVLHERVVLLTMRTDDVPYVHNVERVTIEQLSPTFWRVVARYGWRETPNVAEIFHRCGLEGLSCQMMETSFFMSHESLILTKRPWHLFLRGKLFIALSRNALRAPDQFEIPPNRVIELGTQVEI</sequence>